<comment type="function">
    <text evidence="1">Together with LptD, is involved in the assembly of lipopolysaccharide (LPS) at the surface of the outer membrane. Required for the proper assembly of LptD. Binds LPS and may serve as the LPS recognition site at the outer membrane.</text>
</comment>
<comment type="subunit">
    <text evidence="1">Component of the lipopolysaccharide transport and assembly complex. Interacts with LptD.</text>
</comment>
<comment type="subcellular location">
    <subcellularLocation>
        <location evidence="1">Cell outer membrane</location>
        <topology evidence="1">Lipid-anchor</topology>
    </subcellularLocation>
</comment>
<comment type="similarity">
    <text evidence="1">Belongs to the LptE lipoprotein family.</text>
</comment>
<protein>
    <recommendedName>
        <fullName evidence="1">LPS-assembly lipoprotein LptE</fullName>
    </recommendedName>
</protein>
<sequence>MRHRILTLLLGLAVLVTAGCGFNLRGTTQVPTELQKLLLESSDPYGPLARSIRQQLRLNNVTIVDDAMRKDIPTLRIIGSSESQETVSIFRNGVAAENQLVLHVQAQVLIPGHDIYPLQVNVFRTFFDNPLTALAKEAEAEVLRQEMREQAAQQLVRQLLTVHAAEVKNTQKNGDKPVSDANAAQGSTPTAVNETTLGEPAVSTSAK</sequence>
<dbReference type="EMBL" id="CP000305">
    <property type="protein sequence ID" value="ABG17425.1"/>
    <property type="molecule type" value="Genomic_DNA"/>
</dbReference>
<dbReference type="EMBL" id="ACNQ01000008">
    <property type="protein sequence ID" value="EEO77518.1"/>
    <property type="molecule type" value="Genomic_DNA"/>
</dbReference>
<dbReference type="RefSeq" id="WP_002210332.1">
    <property type="nucleotide sequence ID" value="NZ_ACNQ01000008.1"/>
</dbReference>
<dbReference type="SMR" id="Q1CKQ5"/>
<dbReference type="GeneID" id="57976086"/>
<dbReference type="KEGG" id="ypn:YPN_1094"/>
<dbReference type="HOGENOM" id="CLU_103309_1_1_6"/>
<dbReference type="Proteomes" id="UP000008936">
    <property type="component" value="Chromosome"/>
</dbReference>
<dbReference type="GO" id="GO:0009279">
    <property type="term" value="C:cell outer membrane"/>
    <property type="evidence" value="ECO:0007669"/>
    <property type="project" value="UniProtKB-SubCell"/>
</dbReference>
<dbReference type="GO" id="GO:1990351">
    <property type="term" value="C:transporter complex"/>
    <property type="evidence" value="ECO:0007669"/>
    <property type="project" value="TreeGrafter"/>
</dbReference>
<dbReference type="GO" id="GO:0001530">
    <property type="term" value="F:lipopolysaccharide binding"/>
    <property type="evidence" value="ECO:0007669"/>
    <property type="project" value="TreeGrafter"/>
</dbReference>
<dbReference type="GO" id="GO:0043165">
    <property type="term" value="P:Gram-negative-bacterium-type cell outer membrane assembly"/>
    <property type="evidence" value="ECO:0007669"/>
    <property type="project" value="UniProtKB-UniRule"/>
</dbReference>
<dbReference type="GO" id="GO:0015920">
    <property type="term" value="P:lipopolysaccharide transport"/>
    <property type="evidence" value="ECO:0007669"/>
    <property type="project" value="TreeGrafter"/>
</dbReference>
<dbReference type="Gene3D" id="3.30.160.150">
    <property type="entry name" value="Lipoprotein like domain"/>
    <property type="match status" value="1"/>
</dbReference>
<dbReference type="HAMAP" id="MF_01186">
    <property type="entry name" value="LPS_assembly_LptE"/>
    <property type="match status" value="1"/>
</dbReference>
<dbReference type="InterPro" id="IPR007485">
    <property type="entry name" value="LPS_assembly_LptE"/>
</dbReference>
<dbReference type="NCBIfam" id="NF008062">
    <property type="entry name" value="PRK10796.1"/>
    <property type="match status" value="1"/>
</dbReference>
<dbReference type="PANTHER" id="PTHR38098">
    <property type="entry name" value="LPS-ASSEMBLY LIPOPROTEIN LPTE"/>
    <property type="match status" value="1"/>
</dbReference>
<dbReference type="PANTHER" id="PTHR38098:SF1">
    <property type="entry name" value="LPS-ASSEMBLY LIPOPROTEIN LPTE"/>
    <property type="match status" value="1"/>
</dbReference>
<dbReference type="Pfam" id="PF04390">
    <property type="entry name" value="LptE"/>
    <property type="match status" value="1"/>
</dbReference>
<dbReference type="PROSITE" id="PS51257">
    <property type="entry name" value="PROKAR_LIPOPROTEIN"/>
    <property type="match status" value="1"/>
</dbReference>
<organism>
    <name type="scientific">Yersinia pestis bv. Antiqua (strain Nepal516)</name>
    <dbReference type="NCBI Taxonomy" id="377628"/>
    <lineage>
        <taxon>Bacteria</taxon>
        <taxon>Pseudomonadati</taxon>
        <taxon>Pseudomonadota</taxon>
        <taxon>Gammaproteobacteria</taxon>
        <taxon>Enterobacterales</taxon>
        <taxon>Yersiniaceae</taxon>
        <taxon>Yersinia</taxon>
    </lineage>
</organism>
<evidence type="ECO:0000255" key="1">
    <source>
        <dbReference type="HAMAP-Rule" id="MF_01186"/>
    </source>
</evidence>
<evidence type="ECO:0000256" key="2">
    <source>
        <dbReference type="SAM" id="MobiDB-lite"/>
    </source>
</evidence>
<gene>
    <name evidence="1" type="primary">lptE</name>
    <name type="synonym">rlpB</name>
    <name type="ordered locus">YPN_1094</name>
    <name type="ORF">YP516_1188</name>
</gene>
<feature type="signal peptide" evidence="1">
    <location>
        <begin position="1"/>
        <end position="19"/>
    </location>
</feature>
<feature type="chain" id="PRO_5000115208" description="LPS-assembly lipoprotein LptE">
    <location>
        <begin position="20"/>
        <end position="207"/>
    </location>
</feature>
<feature type="region of interest" description="Disordered" evidence="2">
    <location>
        <begin position="168"/>
        <end position="207"/>
    </location>
</feature>
<feature type="compositionally biased region" description="Polar residues" evidence="2">
    <location>
        <begin position="182"/>
        <end position="207"/>
    </location>
</feature>
<feature type="lipid moiety-binding region" description="N-palmitoyl cysteine" evidence="1">
    <location>
        <position position="20"/>
    </location>
</feature>
<feature type="lipid moiety-binding region" description="S-diacylglycerol cysteine" evidence="1">
    <location>
        <position position="20"/>
    </location>
</feature>
<accession>Q1CKQ5</accession>
<accession>C4GR27</accession>
<reference key="1">
    <citation type="journal article" date="2006" name="J. Bacteriol.">
        <title>Complete genome sequence of Yersinia pestis strains Antiqua and Nepal516: evidence of gene reduction in an emerging pathogen.</title>
        <authorList>
            <person name="Chain P.S.G."/>
            <person name="Hu P."/>
            <person name="Malfatti S.A."/>
            <person name="Radnedge L."/>
            <person name="Larimer F."/>
            <person name="Vergez L.M."/>
            <person name="Worsham P."/>
            <person name="Chu M.C."/>
            <person name="Andersen G.L."/>
        </authorList>
    </citation>
    <scope>NUCLEOTIDE SEQUENCE [LARGE SCALE GENOMIC DNA]</scope>
    <source>
        <strain>Nepal516</strain>
    </source>
</reference>
<reference key="2">
    <citation type="submission" date="2009-04" db="EMBL/GenBank/DDBJ databases">
        <title>Yersinia pestis Nepal516A whole genome shotgun sequencing project.</title>
        <authorList>
            <person name="Plunkett G. III"/>
            <person name="Anderson B.D."/>
            <person name="Baumler D.J."/>
            <person name="Burland V."/>
            <person name="Cabot E.L."/>
            <person name="Glasner J.D."/>
            <person name="Mau B."/>
            <person name="Neeno-Eckwall E."/>
            <person name="Perna N.T."/>
            <person name="Munk A.C."/>
            <person name="Tapia R."/>
            <person name="Green L.D."/>
            <person name="Rogers Y.C."/>
            <person name="Detter J.C."/>
            <person name="Bruce D.C."/>
            <person name="Brettin T.S."/>
        </authorList>
    </citation>
    <scope>NUCLEOTIDE SEQUENCE [LARGE SCALE GENOMIC DNA]</scope>
    <source>
        <strain>Nepal516</strain>
    </source>
</reference>
<keyword id="KW-0998">Cell outer membrane</keyword>
<keyword id="KW-0449">Lipoprotein</keyword>
<keyword id="KW-0472">Membrane</keyword>
<keyword id="KW-0564">Palmitate</keyword>
<keyword id="KW-0732">Signal</keyword>
<proteinExistence type="inferred from homology"/>
<name>LPTE_YERPN</name>